<comment type="subunit">
    <text evidence="1">Part of the 50S ribosomal subunit.</text>
</comment>
<comment type="subcellular location">
    <subcellularLocation>
        <location>Plastid</location>
        <location>Chloroplast</location>
    </subcellularLocation>
</comment>
<comment type="similarity">
    <text evidence="4">Belongs to the universal ribosomal protein uL2 family.</text>
</comment>
<feature type="chain" id="PRO_0000277104" description="Large ribosomal subunit protein uL2c">
    <location>
        <begin position="1"/>
        <end position="275"/>
    </location>
</feature>
<feature type="region of interest" description="Disordered" evidence="3">
    <location>
        <begin position="219"/>
        <end position="254"/>
    </location>
</feature>
<dbReference type="EMBL" id="EF067920">
    <property type="protein sequence ID" value="ABK20679.1"/>
    <property type="molecule type" value="Genomic_DNA"/>
</dbReference>
<dbReference type="RefSeq" id="YP_874456.1">
    <property type="nucleotide sequence ID" value="NC_008588.1"/>
</dbReference>
<dbReference type="SMR" id="A0T0I1"/>
<dbReference type="FunCoup" id="A0T0I1">
    <property type="interactions" value="81"/>
</dbReference>
<dbReference type="STRING" id="556484.A0T0I1"/>
<dbReference type="GeneID" id="4524658"/>
<dbReference type="InParanoid" id="A0T0I1"/>
<dbReference type="Proteomes" id="UP000000759">
    <property type="component" value="Chloroplast"/>
</dbReference>
<dbReference type="GO" id="GO:0009507">
    <property type="term" value="C:chloroplast"/>
    <property type="evidence" value="ECO:0007669"/>
    <property type="project" value="UniProtKB-SubCell"/>
</dbReference>
<dbReference type="GO" id="GO:0005762">
    <property type="term" value="C:mitochondrial large ribosomal subunit"/>
    <property type="evidence" value="ECO:0007669"/>
    <property type="project" value="TreeGrafter"/>
</dbReference>
<dbReference type="GO" id="GO:0019843">
    <property type="term" value="F:rRNA binding"/>
    <property type="evidence" value="ECO:0007669"/>
    <property type="project" value="UniProtKB-UniRule"/>
</dbReference>
<dbReference type="GO" id="GO:0003735">
    <property type="term" value="F:structural constituent of ribosome"/>
    <property type="evidence" value="ECO:0007669"/>
    <property type="project" value="InterPro"/>
</dbReference>
<dbReference type="GO" id="GO:0016740">
    <property type="term" value="F:transferase activity"/>
    <property type="evidence" value="ECO:0007669"/>
    <property type="project" value="InterPro"/>
</dbReference>
<dbReference type="GO" id="GO:0032543">
    <property type="term" value="P:mitochondrial translation"/>
    <property type="evidence" value="ECO:0007669"/>
    <property type="project" value="TreeGrafter"/>
</dbReference>
<dbReference type="FunFam" id="2.30.30.30:FF:000001">
    <property type="entry name" value="50S ribosomal protein L2"/>
    <property type="match status" value="1"/>
</dbReference>
<dbReference type="FunFam" id="2.40.50.140:FF:000003">
    <property type="entry name" value="50S ribosomal protein L2"/>
    <property type="match status" value="1"/>
</dbReference>
<dbReference type="FunFam" id="4.10.950.10:FF:000001">
    <property type="entry name" value="50S ribosomal protein L2"/>
    <property type="match status" value="1"/>
</dbReference>
<dbReference type="Gene3D" id="2.30.30.30">
    <property type="match status" value="1"/>
</dbReference>
<dbReference type="Gene3D" id="2.40.50.140">
    <property type="entry name" value="Nucleic acid-binding proteins"/>
    <property type="match status" value="1"/>
</dbReference>
<dbReference type="Gene3D" id="4.10.950.10">
    <property type="entry name" value="Ribosomal protein L2, domain 3"/>
    <property type="match status" value="1"/>
</dbReference>
<dbReference type="HAMAP" id="MF_01320_B">
    <property type="entry name" value="Ribosomal_uL2_B"/>
    <property type="match status" value="1"/>
</dbReference>
<dbReference type="InterPro" id="IPR012340">
    <property type="entry name" value="NA-bd_OB-fold"/>
</dbReference>
<dbReference type="InterPro" id="IPR014722">
    <property type="entry name" value="Rib_uL2_dom2"/>
</dbReference>
<dbReference type="InterPro" id="IPR002171">
    <property type="entry name" value="Ribosomal_uL2"/>
</dbReference>
<dbReference type="InterPro" id="IPR005880">
    <property type="entry name" value="Ribosomal_uL2_bac/org-type"/>
</dbReference>
<dbReference type="InterPro" id="IPR022669">
    <property type="entry name" value="Ribosomal_uL2_C"/>
</dbReference>
<dbReference type="InterPro" id="IPR022671">
    <property type="entry name" value="Ribosomal_uL2_CS"/>
</dbReference>
<dbReference type="InterPro" id="IPR014726">
    <property type="entry name" value="Ribosomal_uL2_dom3"/>
</dbReference>
<dbReference type="InterPro" id="IPR022666">
    <property type="entry name" value="Ribosomal_uL2_RNA-bd_dom"/>
</dbReference>
<dbReference type="InterPro" id="IPR008991">
    <property type="entry name" value="Translation_prot_SH3-like_sf"/>
</dbReference>
<dbReference type="NCBIfam" id="TIGR01171">
    <property type="entry name" value="rplB_bact"/>
    <property type="match status" value="1"/>
</dbReference>
<dbReference type="PANTHER" id="PTHR13691:SF5">
    <property type="entry name" value="LARGE RIBOSOMAL SUBUNIT PROTEIN UL2M"/>
    <property type="match status" value="1"/>
</dbReference>
<dbReference type="PANTHER" id="PTHR13691">
    <property type="entry name" value="RIBOSOMAL PROTEIN L2"/>
    <property type="match status" value="1"/>
</dbReference>
<dbReference type="Pfam" id="PF00181">
    <property type="entry name" value="Ribosomal_L2"/>
    <property type="match status" value="1"/>
</dbReference>
<dbReference type="Pfam" id="PF03947">
    <property type="entry name" value="Ribosomal_L2_C"/>
    <property type="match status" value="1"/>
</dbReference>
<dbReference type="PIRSF" id="PIRSF002158">
    <property type="entry name" value="Ribosomal_L2"/>
    <property type="match status" value="1"/>
</dbReference>
<dbReference type="SMART" id="SM01383">
    <property type="entry name" value="Ribosomal_L2"/>
    <property type="match status" value="1"/>
</dbReference>
<dbReference type="SMART" id="SM01382">
    <property type="entry name" value="Ribosomal_L2_C"/>
    <property type="match status" value="1"/>
</dbReference>
<dbReference type="SUPFAM" id="SSF50249">
    <property type="entry name" value="Nucleic acid-binding proteins"/>
    <property type="match status" value="1"/>
</dbReference>
<dbReference type="SUPFAM" id="SSF50104">
    <property type="entry name" value="Translation proteins SH3-like domain"/>
    <property type="match status" value="1"/>
</dbReference>
<dbReference type="PROSITE" id="PS00467">
    <property type="entry name" value="RIBOSOMAL_L2"/>
    <property type="match status" value="1"/>
</dbReference>
<sequence>MSIRLYKSYTPGTRNRALSVFDELTKTTPEKSLIRKNHRNKGRNNRGIITVRHRGGGHKRRYRLIDFKRNKYGVEGVIASIEYDPNRNARIALVNYTDGEKRYILQPKNLTVGDRILSGSGSPLNIGNTLPLNEIPLGSSIHNIELIPNRGGQIVRAGGTSAKILAKDGDYITLRLPSKEIRLVRKECFATIGEVSNNDAFLVQSGKAGRTRWLGKRPTVRGSVMNPCDHPHGGGEGRAPIGRTRPLTPWGKPALGMKTRKRKKLSDAYILRRRS</sequence>
<keyword id="KW-0150">Chloroplast</keyword>
<keyword id="KW-0934">Plastid</keyword>
<keyword id="KW-1185">Reference proteome</keyword>
<keyword id="KW-0687">Ribonucleoprotein</keyword>
<keyword id="KW-0689">Ribosomal protein</keyword>
<reference key="1">
    <citation type="journal article" date="2007" name="Mol. Genet. Genomics">
        <title>Chloroplast genomes of the diatoms Phaeodactylum tricornutum and Thalassiosira pseudonana: comparison with other plastid genomes of the red lineage.</title>
        <authorList>
            <person name="Oudot-Le Secq M.-P."/>
            <person name="Grimwood J."/>
            <person name="Shapiro H."/>
            <person name="Armbrust E.V."/>
            <person name="Bowler C."/>
            <person name="Green B.R."/>
        </authorList>
    </citation>
    <scope>NUCLEOTIDE SEQUENCE [LARGE SCALE GENOMIC DNA]</scope>
    <source>
        <strain>CCAP 1055/1</strain>
    </source>
</reference>
<name>RK2_PHATC</name>
<proteinExistence type="inferred from homology"/>
<accession>A0T0I1</accession>
<gene>
    <name type="primary">rpl2</name>
</gene>
<organism>
    <name type="scientific">Phaeodactylum tricornutum (strain CCAP 1055/1)</name>
    <dbReference type="NCBI Taxonomy" id="556484"/>
    <lineage>
        <taxon>Eukaryota</taxon>
        <taxon>Sar</taxon>
        <taxon>Stramenopiles</taxon>
        <taxon>Ochrophyta</taxon>
        <taxon>Bacillariophyta</taxon>
        <taxon>Bacillariophyceae</taxon>
        <taxon>Bacillariophycidae</taxon>
        <taxon>Naviculales</taxon>
        <taxon>Phaeodactylaceae</taxon>
        <taxon>Phaeodactylum</taxon>
    </lineage>
</organism>
<geneLocation type="chloroplast"/>
<protein>
    <recommendedName>
        <fullName evidence="2">Large ribosomal subunit protein uL2c</fullName>
    </recommendedName>
    <alternativeName>
        <fullName evidence="4">50S ribosomal protein L2, chloroplastic</fullName>
    </alternativeName>
</protein>
<evidence type="ECO:0000250" key="1"/>
<evidence type="ECO:0000255" key="2">
    <source>
        <dbReference type="HAMAP-Rule" id="MF_01320"/>
    </source>
</evidence>
<evidence type="ECO:0000256" key="3">
    <source>
        <dbReference type="SAM" id="MobiDB-lite"/>
    </source>
</evidence>
<evidence type="ECO:0000305" key="4"/>